<proteinExistence type="evidence at protein level"/>
<comment type="function">
    <text evidence="3 4">Required for DNA double-strand breaks (DSBs) formation during meiotic recombination (PubMed:31000436, PubMed:31003867). Regulates the spatial and temporal patterns of pre-DSB recombinosome assembly and recombination activity by acting as a scaffold that anchors REC114 and other factors to specific genomic locations, thereby regulating DSB formation (PubMed:31000436, PubMed:31003867). Plays a key role in recombination in the pseudoautosomal regions of sex chromosomes (PubMed:31000436).</text>
</comment>
<comment type="subunit">
    <text evidence="3 4">Interacts with REC114; the interaction is direct (PubMed:31000436, PubMed:31003867). Interacts with IHO1 (PubMed:31000436).</text>
</comment>
<comment type="subcellular location">
    <subcellularLocation>
        <location evidence="3">Nucleus</location>
    </subcellularLocation>
    <subcellularLocation>
        <location evidence="3 4">Chromosome</location>
    </subcellularLocation>
    <text evidence="3">Localizes on chromatin between preleptotene and early pachytene (PubMed:31000436). Associates with the chromosome axes, but disappears from axes upon synaptonemal complex formation (PubMed:31000436).</text>
</comment>
<comment type="tissue specificity">
    <text evidence="3 4">Present in meiotic cells (at protein level).</text>
</comment>
<comment type="disruption phenotype">
    <text evidence="3 4">Fertility defects (PubMed:31000436, PubMed:31003867). Although female mice are fertile, they display fertility defects faster than wild type in advanced age (PubMed:31000436). Male mice are infertile (PubMed:31000436, PubMed:31003867). Defects are caused by delayed recombination initiation (PubMed:31000436). DNA double-strand breaks (DSBs) distribution during meiosis is altered because of reduced selectivity for sites that normally attract DSBs (PubMed:31000436). Spermatocytes have altered DSB locations and fail to target DSBs to the pseudoautosomal regions of sex chromosomes (PubMed:31000436, PubMed:31003867).</text>
</comment>
<organism>
    <name type="scientific">Mus musculus</name>
    <name type="common">Mouse</name>
    <dbReference type="NCBI Taxonomy" id="10090"/>
    <lineage>
        <taxon>Eukaryota</taxon>
        <taxon>Metazoa</taxon>
        <taxon>Chordata</taxon>
        <taxon>Craniata</taxon>
        <taxon>Vertebrata</taxon>
        <taxon>Euteleostomi</taxon>
        <taxon>Mammalia</taxon>
        <taxon>Eutheria</taxon>
        <taxon>Euarchontoglires</taxon>
        <taxon>Glires</taxon>
        <taxon>Rodentia</taxon>
        <taxon>Myomorpha</taxon>
        <taxon>Muroidea</taxon>
        <taxon>Muridae</taxon>
        <taxon>Murinae</taxon>
        <taxon>Mus</taxon>
        <taxon>Mus</taxon>
    </lineage>
</organism>
<dbReference type="EMBL" id="AC154851">
    <property type="status" value="NOT_ANNOTATED_CDS"/>
    <property type="molecule type" value="Genomic_DNA"/>
</dbReference>
<dbReference type="EMBL" id="AC174082">
    <property type="status" value="NOT_ANNOTATED_CDS"/>
    <property type="molecule type" value="Genomic_DNA"/>
</dbReference>
<dbReference type="RefSeq" id="NP_001357857.1">
    <property type="nucleotide sequence ID" value="NM_001370928.1"/>
</dbReference>
<dbReference type="RefSeq" id="XP_006517860.1">
    <property type="nucleotide sequence ID" value="XM_006517797.1"/>
</dbReference>
<dbReference type="RefSeq" id="XP_030103201.1">
    <property type="nucleotide sequence ID" value="XM_030247341.1"/>
</dbReference>
<dbReference type="PDB" id="6NXF">
    <property type="method" value="X-ray"/>
    <property type="resolution" value="2.79 A"/>
    <property type="chains" value="U/V=1716-1765"/>
</dbReference>
<dbReference type="PDBsum" id="6NXF"/>
<dbReference type="SMR" id="A0A140LI88"/>
<dbReference type="FunCoup" id="A0A140LI88">
    <property type="interactions" value="17"/>
</dbReference>
<dbReference type="STRING" id="10090.ENSMUSP00000146720"/>
<dbReference type="PhosphoSitePlus" id="A0A140LI88"/>
<dbReference type="ProteomicsDB" id="318693"/>
<dbReference type="ProteomicsDB" id="361257"/>
<dbReference type="GeneID" id="625662"/>
<dbReference type="AGR" id="MGI:5006716"/>
<dbReference type="MGI" id="MGI:5006716">
    <property type="gene designation" value="Ankrd31"/>
</dbReference>
<dbReference type="InParanoid" id="A0A140LI88"/>
<dbReference type="ChiTaRS" id="Ankrd31">
    <property type="organism name" value="mouse"/>
</dbReference>
<dbReference type="PRO" id="PR:A0A140LI88"/>
<dbReference type="Proteomes" id="UP000000589">
    <property type="component" value="Unplaced"/>
</dbReference>
<dbReference type="RNAct" id="A0A140LI88">
    <property type="molecule type" value="protein"/>
</dbReference>
<dbReference type="GO" id="GO:0000785">
    <property type="term" value="C:chromatin"/>
    <property type="evidence" value="ECO:0000315"/>
    <property type="project" value="UniProtKB"/>
</dbReference>
<dbReference type="GO" id="GO:0005634">
    <property type="term" value="C:nucleus"/>
    <property type="evidence" value="ECO:0007669"/>
    <property type="project" value="UniProtKB-SubCell"/>
</dbReference>
<dbReference type="GO" id="GO:0007129">
    <property type="term" value="P:homologous chromosome pairing at meiosis"/>
    <property type="evidence" value="ECO:0000315"/>
    <property type="project" value="UniProtKB"/>
</dbReference>
<dbReference type="GO" id="GO:0010780">
    <property type="term" value="P:meiotic DNA double-strand break formation involved in reciprocal meiotic recombination"/>
    <property type="evidence" value="ECO:0000315"/>
    <property type="project" value="UniProtKB"/>
</dbReference>
<dbReference type="GO" id="GO:1903343">
    <property type="term" value="P:positive regulation of meiotic DNA double-strand break formation"/>
    <property type="evidence" value="ECO:0000315"/>
    <property type="project" value="UniProtKB"/>
</dbReference>
<dbReference type="Gene3D" id="1.25.40.20">
    <property type="entry name" value="Ankyrin repeat-containing domain"/>
    <property type="match status" value="3"/>
</dbReference>
<dbReference type="InterPro" id="IPR042334">
    <property type="entry name" value="ANKRD31"/>
</dbReference>
<dbReference type="InterPro" id="IPR002110">
    <property type="entry name" value="Ankyrin_rpt"/>
</dbReference>
<dbReference type="InterPro" id="IPR036770">
    <property type="entry name" value="Ankyrin_rpt-contain_sf"/>
</dbReference>
<dbReference type="InterPro" id="IPR040843">
    <property type="entry name" value="RAMA"/>
</dbReference>
<dbReference type="PANTHER" id="PTHR24176:SF14">
    <property type="entry name" value="ANKYRIN REPEAT DOMAIN-CONTAINING PROTEIN 31"/>
    <property type="match status" value="1"/>
</dbReference>
<dbReference type="PANTHER" id="PTHR24176">
    <property type="entry name" value="ANKYRIN REPEAT DOMAIN-CONTAINING PROTEIN 31-RELATED"/>
    <property type="match status" value="1"/>
</dbReference>
<dbReference type="Pfam" id="PF12796">
    <property type="entry name" value="Ank_2"/>
    <property type="match status" value="2"/>
</dbReference>
<dbReference type="Pfam" id="PF18755">
    <property type="entry name" value="RAMA"/>
    <property type="match status" value="1"/>
</dbReference>
<dbReference type="PRINTS" id="PR01415">
    <property type="entry name" value="ANKYRIN"/>
</dbReference>
<dbReference type="SMART" id="SM00248">
    <property type="entry name" value="ANK"/>
    <property type="match status" value="6"/>
</dbReference>
<dbReference type="SUPFAM" id="SSF48403">
    <property type="entry name" value="Ankyrin repeat"/>
    <property type="match status" value="2"/>
</dbReference>
<dbReference type="PROSITE" id="PS50297">
    <property type="entry name" value="ANK_REP_REGION"/>
    <property type="match status" value="2"/>
</dbReference>
<dbReference type="PROSITE" id="PS50088">
    <property type="entry name" value="ANK_REPEAT"/>
    <property type="match status" value="5"/>
</dbReference>
<feature type="chain" id="PRO_0000447624" description="Ankyrin repeat domain-containing protein 31">
    <location>
        <begin position="1"/>
        <end position="1857"/>
    </location>
</feature>
<feature type="repeat" description="ANK 1" evidence="1">
    <location>
        <begin position="475"/>
        <end position="504"/>
    </location>
</feature>
<feature type="repeat" description="ANK 2" evidence="1">
    <location>
        <begin position="508"/>
        <end position="537"/>
    </location>
</feature>
<feature type="repeat" description="ANK 3" evidence="1">
    <location>
        <begin position="541"/>
        <end position="570"/>
    </location>
</feature>
<feature type="repeat" description="ANK 4" evidence="1">
    <location>
        <begin position="1162"/>
        <end position="1191"/>
    </location>
</feature>
<feature type="repeat" description="ANK 5" evidence="1">
    <location>
        <begin position="1195"/>
        <end position="1224"/>
    </location>
</feature>
<feature type="repeat" description="ANK 6" evidence="1">
    <location>
        <begin position="1228"/>
        <end position="1257"/>
    </location>
</feature>
<feature type="domain" description="RAMA" evidence="1">
    <location>
        <begin position="1687"/>
        <end position="1782"/>
    </location>
</feature>
<feature type="region of interest" description="Disordered" evidence="2">
    <location>
        <begin position="1"/>
        <end position="30"/>
    </location>
</feature>
<feature type="region of interest" description="Disordered" evidence="2">
    <location>
        <begin position="195"/>
        <end position="215"/>
    </location>
</feature>
<feature type="region of interest" description="Disordered" evidence="2">
    <location>
        <begin position="676"/>
        <end position="711"/>
    </location>
</feature>
<feature type="region of interest" description="Disordered" evidence="2">
    <location>
        <begin position="813"/>
        <end position="844"/>
    </location>
</feature>
<feature type="region of interest" description="Disordered" evidence="2">
    <location>
        <begin position="995"/>
        <end position="1038"/>
    </location>
</feature>
<feature type="region of interest" description="Disordered" evidence="2">
    <location>
        <begin position="1046"/>
        <end position="1065"/>
    </location>
</feature>
<feature type="region of interest" description="Disordered" evidence="2">
    <location>
        <begin position="1075"/>
        <end position="1137"/>
    </location>
</feature>
<feature type="region of interest" description="Disordered" evidence="2">
    <location>
        <begin position="1457"/>
        <end position="1479"/>
    </location>
</feature>
<feature type="region of interest" description="Disordered" evidence="2">
    <location>
        <begin position="1540"/>
        <end position="1570"/>
    </location>
</feature>
<feature type="region of interest" description="Disordered" evidence="2">
    <location>
        <begin position="1609"/>
        <end position="1640"/>
    </location>
</feature>
<feature type="region of interest" description="Disordered" evidence="2">
    <location>
        <begin position="1663"/>
        <end position="1697"/>
    </location>
</feature>
<feature type="compositionally biased region" description="Polar residues" evidence="2">
    <location>
        <begin position="195"/>
        <end position="207"/>
    </location>
</feature>
<feature type="compositionally biased region" description="Polar residues" evidence="2">
    <location>
        <begin position="676"/>
        <end position="691"/>
    </location>
</feature>
<feature type="compositionally biased region" description="Basic residues" evidence="2">
    <location>
        <begin position="692"/>
        <end position="704"/>
    </location>
</feature>
<feature type="compositionally biased region" description="Polar residues" evidence="2">
    <location>
        <begin position="814"/>
        <end position="839"/>
    </location>
</feature>
<feature type="compositionally biased region" description="Basic and acidic residues" evidence="2">
    <location>
        <begin position="1008"/>
        <end position="1019"/>
    </location>
</feature>
<feature type="compositionally biased region" description="Polar residues" evidence="2">
    <location>
        <begin position="1023"/>
        <end position="1032"/>
    </location>
</feature>
<feature type="compositionally biased region" description="Basic and acidic residues" evidence="2">
    <location>
        <begin position="1082"/>
        <end position="1136"/>
    </location>
</feature>
<feature type="compositionally biased region" description="Polar residues" evidence="2">
    <location>
        <begin position="1555"/>
        <end position="1570"/>
    </location>
</feature>
<feature type="compositionally biased region" description="Low complexity" evidence="2">
    <location>
        <begin position="1663"/>
        <end position="1683"/>
    </location>
</feature>
<feature type="mutagenesis site" description="Abolished interaction with REC114." evidence="4">
    <original>YL</original>
    <variation>AA</variation>
    <location>
        <begin position="1818"/>
        <end position="1819"/>
    </location>
</feature>
<feature type="mutagenesis site" description="Reduced interaction with REC114." evidence="4">
    <original>E</original>
    <variation>A</variation>
    <location>
        <position position="1831"/>
    </location>
</feature>
<feature type="mutagenesis site" description="Abolished interaction with REC114." evidence="4">
    <original>W</original>
    <variation>A</variation>
    <location>
        <position position="1842"/>
    </location>
</feature>
<feature type="strand" evidence="7">
    <location>
        <begin position="1813"/>
        <end position="1816"/>
    </location>
</feature>
<feature type="helix" evidence="7">
    <location>
        <begin position="1817"/>
        <end position="1819"/>
    </location>
</feature>
<feature type="strand" evidence="7">
    <location>
        <begin position="1823"/>
        <end position="1825"/>
    </location>
</feature>
<feature type="helix" evidence="7">
    <location>
        <begin position="1829"/>
        <end position="1831"/>
    </location>
</feature>
<feature type="helix" evidence="7">
    <location>
        <begin position="1835"/>
        <end position="1846"/>
    </location>
</feature>
<feature type="helix" evidence="7">
    <location>
        <begin position="1848"/>
        <end position="1850"/>
    </location>
</feature>
<feature type="turn" evidence="7">
    <location>
        <begin position="1851"/>
        <end position="1854"/>
    </location>
</feature>
<protein>
    <recommendedName>
        <fullName evidence="5">Ankyrin repeat domain-containing protein 31</fullName>
    </recommendedName>
</protein>
<accession>A0A140LI88</accession>
<accession>A0A140LIB3</accession>
<name>ANR31_MOUSE</name>
<evidence type="ECO:0000255" key="1"/>
<evidence type="ECO:0000256" key="2">
    <source>
        <dbReference type="SAM" id="MobiDB-lite"/>
    </source>
</evidence>
<evidence type="ECO:0000269" key="3">
    <source>
    </source>
</evidence>
<evidence type="ECO:0000269" key="4">
    <source>
    </source>
</evidence>
<evidence type="ECO:0000305" key="5"/>
<evidence type="ECO:0000312" key="6">
    <source>
        <dbReference type="MGI" id="MGI:5006716"/>
    </source>
</evidence>
<evidence type="ECO:0007829" key="7">
    <source>
        <dbReference type="PDB" id="6NXF"/>
    </source>
</evidence>
<reference key="1">
    <citation type="journal article" date="2009" name="PLoS Biol.">
        <title>Lineage-specific biology revealed by a finished genome assembly of the mouse.</title>
        <authorList>
            <person name="Church D.M."/>
            <person name="Goodstadt L."/>
            <person name="Hillier L.W."/>
            <person name="Zody M.C."/>
            <person name="Goldstein S."/>
            <person name="She X."/>
            <person name="Bult C.J."/>
            <person name="Agarwala R."/>
            <person name="Cherry J.L."/>
            <person name="DiCuccio M."/>
            <person name="Hlavina W."/>
            <person name="Kapustin Y."/>
            <person name="Meric P."/>
            <person name="Maglott D."/>
            <person name="Birtle Z."/>
            <person name="Marques A.C."/>
            <person name="Graves T."/>
            <person name="Zhou S."/>
            <person name="Teague B."/>
            <person name="Potamousis K."/>
            <person name="Churas C."/>
            <person name="Place M."/>
            <person name="Herschleb J."/>
            <person name="Runnheim R."/>
            <person name="Forrest D."/>
            <person name="Amos-Landgraf J."/>
            <person name="Schwartz D.C."/>
            <person name="Cheng Z."/>
            <person name="Lindblad-Toh K."/>
            <person name="Eichler E.E."/>
            <person name="Ponting C.P."/>
        </authorList>
    </citation>
    <scope>NUCLEOTIDE SEQUENCE [LARGE SCALE GENOMIC DNA]</scope>
    <source>
        <strain>C57BL/6J</strain>
    </source>
</reference>
<reference key="2">
    <citation type="journal article" date="2019" name="Mol. Cell">
        <title>REC114 partner ANKRD31 controls number, timing, and location of meiotic DNA breaks.</title>
        <authorList>
            <person name="Boekhout M."/>
            <person name="Karasu M.E."/>
            <person name="Wang J."/>
            <person name="Acquaviva L."/>
            <person name="Pratto F."/>
            <person name="Brick K."/>
            <person name="Eng D.Y."/>
            <person name="Xu J."/>
            <person name="Camerini-Otero R.D."/>
            <person name="Patel D.J."/>
            <person name="Keeney S."/>
        </authorList>
    </citation>
    <scope>FUNCTION</scope>
    <scope>SUBCELLULAR LOCATION</scope>
    <scope>TISSUE SPECIFICITY</scope>
    <scope>DISRUPTION PHENOTYPE</scope>
    <scope>INTERACTION WITH REC114</scope>
    <scope>X-RAY CRYSTALLOGRAPHY (2.79 ANGSTROMS) OF 1716-1765 IN COMPLEX WITH REC114</scope>
    <scope>MUTAGENESIS OF 1818-TYR-LEU-1819; GLU-1831 AND TRP-1842</scope>
</reference>
<reference key="3">
    <citation type="journal article" date="2019" name="Mol. Cell">
        <title>Mouse ANKRD31 regulates spatiotemporal patterning of meiotic recombination initiation and ensures recombination between X and Y sex chromosomes.</title>
        <authorList>
            <person name="Papanikos F."/>
            <person name="Clement J.A.J."/>
            <person name="Testa E."/>
            <person name="Ravindranathan R."/>
            <person name="Grey C."/>
            <person name="Dereli I."/>
            <person name="Bondarieva A."/>
            <person name="Valerio-Cabrera S."/>
            <person name="Stanzione M."/>
            <person name="Schleiffer A."/>
            <person name="Jansa P."/>
            <person name="Lustyk D."/>
            <person name="Fei J.F."/>
            <person name="Adams I.R."/>
            <person name="Forejt J."/>
            <person name="Barchi M."/>
            <person name="de Massy B."/>
            <person name="Toth A."/>
        </authorList>
    </citation>
    <scope>FUNCTION</scope>
    <scope>SUBCELLULAR LOCATION</scope>
    <scope>INTERACTION WITH REC114 AND IHO1</scope>
    <scope>TISSUE SPECIFICITY</scope>
    <scope>DISRUPTION PHENOTYPE</scope>
</reference>
<gene>
    <name evidence="6" type="primary">Ankrd31</name>
</gene>
<sequence length="1857" mass="206173">MENGAEASDCDSDETVIEGSVTENEPEDEELPWRRLLLNQDTTCRSEFCFHSGVDGMQKGIHSPEIQLGLKLRKDSQEQNNKNKLLLALSEDLVLQDPQDKTAQNQVLLQTTKEFPVFTVSFPHPEVSWSHQNTGGHEAENCENLPHSKKELRENSDSPEVSLLSGTSPVAPDLVALKERLTEPVKTLAVPNTLSEPGEEVTQTMTSKETKDEESSLETFVSTLEKLLESSECTQEERLLEVMDDFNPQELFSTLSNSLGSVSVPLNAWAAQGRDELENKADAALPAKLLAAVNTGADVGPSCQGQEKSSSVSGGNGCLAVQPIMSQVDEDCTQIAQNIEDPKPFRLQTLTHENAISYEQINKKKNSDPIKNTSTQETPRVLRRSSRLEKLKASRDVVHTEAVLKKPERILSNTLSFKDQINSIFTTDSFSKRKNMHSSGFKNEQIRKSEQLRKKNGTGEMKKMCLCTINRRNVFGENLLYKAALHNDVDLVRCCIKNGENVNQPSYDGWTALHEASIGGYYQAVSELLKGGADVNVKGKYQITPLHDAVMNRHYKVAELLLMSGADPLFRSDHGTCALDEAKDSSMETLLMKYIPQQKKCHLSAQRNSTDPAHVEDMFQNKKPKLSSNNYTEFICDENFDRQEPGHLEINKGSNNLLMSKEYVCEHCQKDSNTTKFGKSNLNSVKNSRTNVSKRKGQKNRQQKKTQVDDRDCNLSQKIGTSSFRRTNKLLTQQQHAVQTLSDLPEESFELSTTTLSSLENGIGYNEACLVSKKSDTHVLDSSDGQELESVDQTEAASVSELSSYKEIKLLPVTTHQQPHTNQEQYSSPYKSLGNNSSNEKGKATNKWEDSFFSFIKGRSADSDSDCHTLDKSIASPKEGMSHDHHEEIMTGQEVDSQQRLSSENYFSQENDLKVHPLTTHPQEEAVNFCDSNLISVQHTPDYKNCLHEISFGNSYAKTEQSSTSCTRPPSTQKVSPLTVEVELLKGLQDSLAHRDSSPLVNQAGIHSLERKQDTDKNYTKKGPNTSSSSRPLPTVVHSQVIEITKAEKRREDLPGNEPINNTDFYSTDINKELANSSQLNQRKEKENVRKSDAELTHNDSEAERTLKSCEEKKKNMDSETHSPCDIQEHRKDQNFRKRKCSLKAPCSQGVNTTGIGKRNKKGESQLHVAARGGNLSRVKVLIEARADVNLRDNAGWTPLHKAASGGFDDVIIELLQAGANVNCENIDGIVPLHGASAGNHLKAAEILLEHGANPNQKDQKQRTALDEADDEKMKELLKSYGAIESTNGEKRNSTDLVKIPTVQPKRYKQFICDNDKAIGSPVPSHKAKKSESLPVHQTISAILQDIEEKQENLLKLEIRNSEDEEQYIGKMLEIKEVMDNILAQQKTERDDLAKKYRVSMESFKHGALREQLANLATRQKSLLVVAKKQKKIRLKIQNYKNATAVSGVGLRKLPCNSDISSDKKSQEPPTMGDSAHAQPGLLAPVSLAYGSMQEIPLSPEIESESQKINICLNAEAIRREEFSGNDINSKQNVQDCTLGGLLRSKPTDDAEKIASSSQPAALTPHAENSQAEATVKGCGFDSSALTGTINISEDKSIFSPNGACLAADPHSQKLSRCNPKRRNKKTASQQPSAGAAEPLPQAPAVLDTYTVHQTLPCLRDSAAAASHTDSTQSSLSSASAHQHPTKTVPHRNTTPRKKAVQLKDLILRGRINPGNNILEFKTQETTHRASVLPSGKLKGENGQIYQNPVTWLKELLGGGSYVTWNYAWNTVTYLGRELVKCVSEEAPMSAELNPPQLHQPHLSAGTSRESMQTIPHYLQIKEILQISKQELLPCHVMEQHWKFYVGRSHSEALLSW</sequence>
<keyword id="KW-0002">3D-structure</keyword>
<keyword id="KW-0040">ANK repeat</keyword>
<keyword id="KW-0158">Chromosome</keyword>
<keyword id="KW-0233">DNA recombination</keyword>
<keyword id="KW-0469">Meiosis</keyword>
<keyword id="KW-0539">Nucleus</keyword>
<keyword id="KW-1185">Reference proteome</keyword>
<keyword id="KW-0677">Repeat</keyword>